<gene>
    <name evidence="1" type="primary">lipA</name>
    <name type="ordered locus">KRH_14460</name>
</gene>
<dbReference type="EC" id="2.8.1.8" evidence="1"/>
<dbReference type="EMBL" id="AP009152">
    <property type="protein sequence ID" value="BAG29793.1"/>
    <property type="molecule type" value="Genomic_DNA"/>
</dbReference>
<dbReference type="RefSeq" id="WP_012398514.1">
    <property type="nucleotide sequence ID" value="NZ_VECX01000006.1"/>
</dbReference>
<dbReference type="SMR" id="B2GJ88"/>
<dbReference type="STRING" id="378753.KRH_14460"/>
<dbReference type="KEGG" id="krh:KRH_14460"/>
<dbReference type="eggNOG" id="COG0320">
    <property type="taxonomic scope" value="Bacteria"/>
</dbReference>
<dbReference type="HOGENOM" id="CLU_033144_2_1_11"/>
<dbReference type="OrthoDB" id="9787898at2"/>
<dbReference type="UniPathway" id="UPA00538">
    <property type="reaction ID" value="UER00593"/>
</dbReference>
<dbReference type="Proteomes" id="UP000008838">
    <property type="component" value="Chromosome"/>
</dbReference>
<dbReference type="GO" id="GO:0005737">
    <property type="term" value="C:cytoplasm"/>
    <property type="evidence" value="ECO:0007669"/>
    <property type="project" value="UniProtKB-SubCell"/>
</dbReference>
<dbReference type="GO" id="GO:0051539">
    <property type="term" value="F:4 iron, 4 sulfur cluster binding"/>
    <property type="evidence" value="ECO:0007669"/>
    <property type="project" value="UniProtKB-UniRule"/>
</dbReference>
<dbReference type="GO" id="GO:0016992">
    <property type="term" value="F:lipoate synthase activity"/>
    <property type="evidence" value="ECO:0007669"/>
    <property type="project" value="UniProtKB-UniRule"/>
</dbReference>
<dbReference type="GO" id="GO:0046872">
    <property type="term" value="F:metal ion binding"/>
    <property type="evidence" value="ECO:0007669"/>
    <property type="project" value="UniProtKB-KW"/>
</dbReference>
<dbReference type="CDD" id="cd01335">
    <property type="entry name" value="Radical_SAM"/>
    <property type="match status" value="1"/>
</dbReference>
<dbReference type="Gene3D" id="3.20.20.70">
    <property type="entry name" value="Aldolase class I"/>
    <property type="match status" value="1"/>
</dbReference>
<dbReference type="HAMAP" id="MF_00206">
    <property type="entry name" value="Lipoyl_synth"/>
    <property type="match status" value="1"/>
</dbReference>
<dbReference type="InterPro" id="IPR013785">
    <property type="entry name" value="Aldolase_TIM"/>
</dbReference>
<dbReference type="InterPro" id="IPR006638">
    <property type="entry name" value="Elp3/MiaA/NifB-like_rSAM"/>
</dbReference>
<dbReference type="InterPro" id="IPR031691">
    <property type="entry name" value="LIAS_N"/>
</dbReference>
<dbReference type="InterPro" id="IPR003698">
    <property type="entry name" value="Lipoyl_synth"/>
</dbReference>
<dbReference type="InterPro" id="IPR007197">
    <property type="entry name" value="rSAM"/>
</dbReference>
<dbReference type="NCBIfam" id="TIGR00510">
    <property type="entry name" value="lipA"/>
    <property type="match status" value="1"/>
</dbReference>
<dbReference type="NCBIfam" id="NF004019">
    <property type="entry name" value="PRK05481.1"/>
    <property type="match status" value="1"/>
</dbReference>
<dbReference type="NCBIfam" id="NF009544">
    <property type="entry name" value="PRK12928.1"/>
    <property type="match status" value="1"/>
</dbReference>
<dbReference type="PANTHER" id="PTHR10949">
    <property type="entry name" value="LIPOYL SYNTHASE"/>
    <property type="match status" value="1"/>
</dbReference>
<dbReference type="PANTHER" id="PTHR10949:SF0">
    <property type="entry name" value="LIPOYL SYNTHASE, MITOCHONDRIAL"/>
    <property type="match status" value="1"/>
</dbReference>
<dbReference type="Pfam" id="PF16881">
    <property type="entry name" value="LIAS_N"/>
    <property type="match status" value="1"/>
</dbReference>
<dbReference type="Pfam" id="PF04055">
    <property type="entry name" value="Radical_SAM"/>
    <property type="match status" value="1"/>
</dbReference>
<dbReference type="PIRSF" id="PIRSF005963">
    <property type="entry name" value="Lipoyl_synth"/>
    <property type="match status" value="1"/>
</dbReference>
<dbReference type="SFLD" id="SFLDF00271">
    <property type="entry name" value="lipoyl_synthase"/>
    <property type="match status" value="1"/>
</dbReference>
<dbReference type="SFLD" id="SFLDS00029">
    <property type="entry name" value="Radical_SAM"/>
    <property type="match status" value="1"/>
</dbReference>
<dbReference type="SMART" id="SM00729">
    <property type="entry name" value="Elp3"/>
    <property type="match status" value="1"/>
</dbReference>
<dbReference type="SUPFAM" id="SSF102114">
    <property type="entry name" value="Radical SAM enzymes"/>
    <property type="match status" value="1"/>
</dbReference>
<dbReference type="PROSITE" id="PS51918">
    <property type="entry name" value="RADICAL_SAM"/>
    <property type="match status" value="1"/>
</dbReference>
<proteinExistence type="inferred from homology"/>
<comment type="function">
    <text evidence="1">Catalyzes the radical-mediated insertion of two sulfur atoms into the C-6 and C-8 positions of the octanoyl moiety bound to the lipoyl domains of lipoate-dependent enzymes, thereby converting the octanoylated domains into lipoylated derivatives.</text>
</comment>
<comment type="catalytic activity">
    <reaction evidence="1">
        <text>[[Fe-S] cluster scaffold protein carrying a second [4Fe-4S](2+) cluster] + N(6)-octanoyl-L-lysyl-[protein] + 2 oxidized [2Fe-2S]-[ferredoxin] + 2 S-adenosyl-L-methionine + 4 H(+) = [[Fe-S] cluster scaffold protein] + N(6)-[(R)-dihydrolipoyl]-L-lysyl-[protein] + 4 Fe(3+) + 2 hydrogen sulfide + 2 5'-deoxyadenosine + 2 L-methionine + 2 reduced [2Fe-2S]-[ferredoxin]</text>
        <dbReference type="Rhea" id="RHEA:16585"/>
        <dbReference type="Rhea" id="RHEA-COMP:9928"/>
        <dbReference type="Rhea" id="RHEA-COMP:10000"/>
        <dbReference type="Rhea" id="RHEA-COMP:10001"/>
        <dbReference type="Rhea" id="RHEA-COMP:10475"/>
        <dbReference type="Rhea" id="RHEA-COMP:14568"/>
        <dbReference type="Rhea" id="RHEA-COMP:14569"/>
        <dbReference type="ChEBI" id="CHEBI:15378"/>
        <dbReference type="ChEBI" id="CHEBI:17319"/>
        <dbReference type="ChEBI" id="CHEBI:29034"/>
        <dbReference type="ChEBI" id="CHEBI:29919"/>
        <dbReference type="ChEBI" id="CHEBI:33722"/>
        <dbReference type="ChEBI" id="CHEBI:33737"/>
        <dbReference type="ChEBI" id="CHEBI:33738"/>
        <dbReference type="ChEBI" id="CHEBI:57844"/>
        <dbReference type="ChEBI" id="CHEBI:59789"/>
        <dbReference type="ChEBI" id="CHEBI:78809"/>
        <dbReference type="ChEBI" id="CHEBI:83100"/>
        <dbReference type="EC" id="2.8.1.8"/>
    </reaction>
</comment>
<comment type="cofactor">
    <cofactor evidence="1">
        <name>[4Fe-4S] cluster</name>
        <dbReference type="ChEBI" id="CHEBI:49883"/>
    </cofactor>
    <text evidence="1">Binds 2 [4Fe-4S] clusters per subunit. One cluster is coordinated with 3 cysteines and an exchangeable S-adenosyl-L-methionine.</text>
</comment>
<comment type="pathway">
    <text evidence="1">Protein modification; protein lipoylation via endogenous pathway; protein N(6)-(lipoyl)lysine from octanoyl-[acyl-carrier-protein]: step 2/2.</text>
</comment>
<comment type="subcellular location">
    <subcellularLocation>
        <location evidence="1">Cytoplasm</location>
    </subcellularLocation>
</comment>
<comment type="similarity">
    <text evidence="1">Belongs to the radical SAM superfamily. Lipoyl synthase family.</text>
</comment>
<keyword id="KW-0004">4Fe-4S</keyword>
<keyword id="KW-0963">Cytoplasm</keyword>
<keyword id="KW-0408">Iron</keyword>
<keyword id="KW-0411">Iron-sulfur</keyword>
<keyword id="KW-0479">Metal-binding</keyword>
<keyword id="KW-1185">Reference proteome</keyword>
<keyword id="KW-0949">S-adenosyl-L-methionine</keyword>
<keyword id="KW-0808">Transferase</keyword>
<organism>
    <name type="scientific">Kocuria rhizophila (strain ATCC 9341 / DSM 348 / NBRC 103217 / DC2201)</name>
    <dbReference type="NCBI Taxonomy" id="378753"/>
    <lineage>
        <taxon>Bacteria</taxon>
        <taxon>Bacillati</taxon>
        <taxon>Actinomycetota</taxon>
        <taxon>Actinomycetes</taxon>
        <taxon>Micrococcales</taxon>
        <taxon>Micrococcaceae</taxon>
        <taxon>Kocuria</taxon>
    </lineage>
</organism>
<evidence type="ECO:0000255" key="1">
    <source>
        <dbReference type="HAMAP-Rule" id="MF_00206"/>
    </source>
</evidence>
<evidence type="ECO:0000255" key="2">
    <source>
        <dbReference type="PROSITE-ProRule" id="PRU01266"/>
    </source>
</evidence>
<name>LIPA_KOCRD</name>
<feature type="chain" id="PRO_1000099609" description="Lipoyl synthase">
    <location>
        <begin position="1"/>
        <end position="335"/>
    </location>
</feature>
<feature type="domain" description="Radical SAM core" evidence="2">
    <location>
        <begin position="67"/>
        <end position="281"/>
    </location>
</feature>
<feature type="binding site" evidence="1">
    <location>
        <position position="55"/>
    </location>
    <ligand>
        <name>[4Fe-4S] cluster</name>
        <dbReference type="ChEBI" id="CHEBI:49883"/>
        <label>1</label>
    </ligand>
</feature>
<feature type="binding site" evidence="1">
    <location>
        <position position="60"/>
    </location>
    <ligand>
        <name>[4Fe-4S] cluster</name>
        <dbReference type="ChEBI" id="CHEBI:49883"/>
        <label>1</label>
    </ligand>
</feature>
<feature type="binding site" evidence="1">
    <location>
        <position position="66"/>
    </location>
    <ligand>
        <name>[4Fe-4S] cluster</name>
        <dbReference type="ChEBI" id="CHEBI:49883"/>
        <label>1</label>
    </ligand>
</feature>
<feature type="binding site" evidence="1">
    <location>
        <position position="81"/>
    </location>
    <ligand>
        <name>[4Fe-4S] cluster</name>
        <dbReference type="ChEBI" id="CHEBI:49883"/>
        <label>2</label>
        <note>4Fe-4S-S-AdoMet</note>
    </ligand>
</feature>
<feature type="binding site" evidence="1">
    <location>
        <position position="85"/>
    </location>
    <ligand>
        <name>[4Fe-4S] cluster</name>
        <dbReference type="ChEBI" id="CHEBI:49883"/>
        <label>2</label>
        <note>4Fe-4S-S-AdoMet</note>
    </ligand>
</feature>
<feature type="binding site" evidence="1">
    <location>
        <position position="88"/>
    </location>
    <ligand>
        <name>[4Fe-4S] cluster</name>
        <dbReference type="ChEBI" id="CHEBI:49883"/>
        <label>2</label>
        <note>4Fe-4S-S-AdoMet</note>
    </ligand>
</feature>
<feature type="binding site" evidence="1">
    <location>
        <position position="292"/>
    </location>
    <ligand>
        <name>[4Fe-4S] cluster</name>
        <dbReference type="ChEBI" id="CHEBI:49883"/>
        <label>1</label>
    </ligand>
</feature>
<protein>
    <recommendedName>
        <fullName evidence="1">Lipoyl synthase</fullName>
        <ecNumber evidence="1">2.8.1.8</ecNumber>
    </recommendedName>
    <alternativeName>
        <fullName evidence="1">Lip-syn</fullName>
        <shortName evidence="1">LS</shortName>
    </alternativeName>
    <alternativeName>
        <fullName evidence="1">Lipoate synthase</fullName>
    </alternativeName>
    <alternativeName>
        <fullName evidence="1">Lipoic acid synthase</fullName>
    </alternativeName>
    <alternativeName>
        <fullName evidence="1">Sulfur insertion protein LipA</fullName>
    </alternativeName>
</protein>
<accession>B2GJ88</accession>
<reference key="1">
    <citation type="journal article" date="2008" name="J. Bacteriol.">
        <title>Complete genome sequence of the soil actinomycete Kocuria rhizophila.</title>
        <authorList>
            <person name="Takarada H."/>
            <person name="Sekine M."/>
            <person name="Kosugi H."/>
            <person name="Matsuo Y."/>
            <person name="Fujisawa T."/>
            <person name="Omata S."/>
            <person name="Kishi E."/>
            <person name="Shimizu A."/>
            <person name="Tsukatani N."/>
            <person name="Tanikawa S."/>
            <person name="Fujita N."/>
            <person name="Harayama S."/>
        </authorList>
    </citation>
    <scope>NUCLEOTIDE SEQUENCE [LARGE SCALE GENOMIC DNA]</scope>
    <source>
        <strain>ATCC 9341 / DSM 348 / NBRC 103217 / DC2201</strain>
    </source>
</reference>
<sequence>MTIAPEGRKLLRVEARNAEVPIEKKPSWLKNTAKMGPQFTELKSMARGRGLHTVCEEAGCPNIYECWEDREATFLIGGDTCTRRCDFCDIATGKPGMVDVAEPRKVAESVRDLGLRYATVTSVARDDLADGGAWLNAETIRAIHAMNPSTGVEILIPDFKGQPDAVQQVIDAQPEVFAHNLETVPRIFKQIRPAFAYERSLDVLTQGKEHGMIVKSNLILGMGETDDEVYEALCDLHDAGCDIITLTQYLRPGPTFHPIDRWVKPETFVELSKAAEEIGFLGVMAGPMVRSSYRAGKLWARAMKKMGREIPEHLSHIDDSGSATQEASSLLARLG</sequence>